<protein>
    <recommendedName>
        <fullName>Ras association domain-containing protein 7</fullName>
    </recommendedName>
</protein>
<feature type="chain" id="PRO_0000097174" description="Ras association domain-containing protein 7">
    <location>
        <begin position="1"/>
        <end position="359"/>
    </location>
</feature>
<feature type="domain" description="Ras-associating" evidence="3">
    <location>
        <begin position="6"/>
        <end position="89"/>
    </location>
</feature>
<feature type="region of interest" description="Disordered" evidence="4">
    <location>
        <begin position="87"/>
        <end position="123"/>
    </location>
</feature>
<feature type="region of interest" description="Disordered" evidence="4">
    <location>
        <begin position="339"/>
        <end position="359"/>
    </location>
</feature>
<feature type="coiled-coil region" evidence="2">
    <location>
        <begin position="180"/>
        <end position="208"/>
    </location>
</feature>
<feature type="coiled-coil region" evidence="2">
    <location>
        <begin position="242"/>
        <end position="301"/>
    </location>
</feature>
<feature type="compositionally biased region" description="Polar residues" evidence="4">
    <location>
        <begin position="89"/>
        <end position="99"/>
    </location>
</feature>
<feature type="sequence conflict" description="In Ref. 1; BAB21960." evidence="5" ref="1">
    <original>L</original>
    <variation>P</variation>
    <location>
        <position position="53"/>
    </location>
</feature>
<feature type="sequence conflict" description="In Ref. 1." evidence="5" ref="1">
    <original>V</original>
    <variation>F</variation>
    <location>
        <position position="350"/>
    </location>
</feature>
<feature type="sequence conflict" description="In Ref. 1." evidence="5" ref="1">
    <location>
        <begin position="353"/>
        <end position="359"/>
    </location>
</feature>
<comment type="function">
    <text evidence="1">Negatively regulates stress-induced JNK activation and apoptosis by promoting MAP2K7 phosphorylation and inhibiting its ability to activate JNK. Following prolonged stress, anti-apoptotic effect stops because of degradation of RASSF7 protein via the ubiquitin-proteasome pathway. Required for the activation of AURKB and chromosomal congression during mitosis where it stimulates microtubule polymerization (By similarity).</text>
</comment>
<comment type="subunit">
    <text evidence="1">Interacts with MAP2K7 and GTP-bound NRAS.</text>
</comment>
<comment type="subcellular location">
    <subcellularLocation>
        <location evidence="1">Cytoplasm</location>
        <location evidence="1">Cytoskeleton</location>
        <location evidence="1">Microtubule organizing center</location>
        <location evidence="1">Centrosome</location>
    </subcellularLocation>
    <text evidence="1">Colocalizes with gamma-tubulin.</text>
</comment>
<comment type="PTM">
    <text evidence="1">Polyubiquitinated and degraded by the proteasome upon prolonged stress stimuli.</text>
</comment>
<proteinExistence type="evidence at transcript level"/>
<organism>
    <name type="scientific">Mus musculus</name>
    <name type="common">Mouse</name>
    <dbReference type="NCBI Taxonomy" id="10090"/>
    <lineage>
        <taxon>Eukaryota</taxon>
        <taxon>Metazoa</taxon>
        <taxon>Chordata</taxon>
        <taxon>Craniata</taxon>
        <taxon>Vertebrata</taxon>
        <taxon>Euteleostomi</taxon>
        <taxon>Mammalia</taxon>
        <taxon>Eutheria</taxon>
        <taxon>Euarchontoglires</taxon>
        <taxon>Glires</taxon>
        <taxon>Rodentia</taxon>
        <taxon>Myomorpha</taxon>
        <taxon>Muroidea</taxon>
        <taxon>Muridae</taxon>
        <taxon>Murinae</taxon>
        <taxon>Mus</taxon>
        <taxon>Mus</taxon>
    </lineage>
</organism>
<dbReference type="EMBL" id="AK002243">
    <property type="protein sequence ID" value="BAB21960.1"/>
    <property type="molecule type" value="mRNA"/>
</dbReference>
<dbReference type="EMBL" id="BC011131">
    <property type="protein sequence ID" value="AAH11131.1"/>
    <property type="molecule type" value="mRNA"/>
</dbReference>
<dbReference type="CCDS" id="CCDS40182.1"/>
<dbReference type="RefSeq" id="NP_080162.3">
    <property type="nucleotide sequence ID" value="NM_025886.3"/>
</dbReference>
<dbReference type="RefSeq" id="XP_006536289.1">
    <property type="nucleotide sequence ID" value="XM_006536226.5"/>
</dbReference>
<dbReference type="RefSeq" id="XP_006536290.1">
    <property type="nucleotide sequence ID" value="XM_006536227.5"/>
</dbReference>
<dbReference type="RefSeq" id="XP_006536291.1">
    <property type="nucleotide sequence ID" value="XM_006536228.4"/>
</dbReference>
<dbReference type="SMR" id="Q9DD19"/>
<dbReference type="FunCoup" id="Q9DD19">
    <property type="interactions" value="8"/>
</dbReference>
<dbReference type="STRING" id="10090.ENSMUSP00000038444"/>
<dbReference type="PhosphoSitePlus" id="Q9DD19"/>
<dbReference type="PaxDb" id="10090-ENSMUSP00000038444"/>
<dbReference type="ProteomicsDB" id="300308"/>
<dbReference type="Antibodypedia" id="9750">
    <property type="antibodies" value="244 antibodies from 33 providers"/>
</dbReference>
<dbReference type="DNASU" id="66985"/>
<dbReference type="Ensembl" id="ENSMUST00000046890.12">
    <property type="protein sequence ID" value="ENSMUSP00000038444.6"/>
    <property type="gene ID" value="ENSMUSG00000038618.13"/>
</dbReference>
<dbReference type="GeneID" id="66985"/>
<dbReference type="KEGG" id="mmu:66985"/>
<dbReference type="UCSC" id="uc009kka.1">
    <property type="organism name" value="mouse"/>
</dbReference>
<dbReference type="AGR" id="MGI:1914235"/>
<dbReference type="CTD" id="8045"/>
<dbReference type="MGI" id="MGI:1914235">
    <property type="gene designation" value="Rassf7"/>
</dbReference>
<dbReference type="VEuPathDB" id="HostDB:ENSMUSG00000038618"/>
<dbReference type="eggNOG" id="KOG1574">
    <property type="taxonomic scope" value="Eukaryota"/>
</dbReference>
<dbReference type="GeneTree" id="ENSGT00950000182839"/>
<dbReference type="HOGENOM" id="CLU_031151_0_1_1"/>
<dbReference type="InParanoid" id="Q9DD19"/>
<dbReference type="OMA" id="MSRWRHQ"/>
<dbReference type="OrthoDB" id="86775at9989"/>
<dbReference type="PhylomeDB" id="Q9DD19"/>
<dbReference type="TreeFam" id="TF318385"/>
<dbReference type="BioGRID-ORCS" id="66985">
    <property type="hits" value="1 hit in 76 CRISPR screens"/>
</dbReference>
<dbReference type="PRO" id="PR:Q9DD19"/>
<dbReference type="Proteomes" id="UP000000589">
    <property type="component" value="Chromosome 7"/>
</dbReference>
<dbReference type="RNAct" id="Q9DD19">
    <property type="molecule type" value="protein"/>
</dbReference>
<dbReference type="Bgee" id="ENSMUSG00000038618">
    <property type="expression patterns" value="Expressed in esophagus and 182 other cell types or tissues"/>
</dbReference>
<dbReference type="ExpressionAtlas" id="Q9DD19">
    <property type="expression patterns" value="baseline and differential"/>
</dbReference>
<dbReference type="GO" id="GO:0034451">
    <property type="term" value="C:centriolar satellite"/>
    <property type="evidence" value="ECO:0007669"/>
    <property type="project" value="Ensembl"/>
</dbReference>
<dbReference type="GO" id="GO:0005737">
    <property type="term" value="C:cytoplasm"/>
    <property type="evidence" value="ECO:0007669"/>
    <property type="project" value="UniProtKB-KW"/>
</dbReference>
<dbReference type="GO" id="GO:0006915">
    <property type="term" value="P:apoptotic process"/>
    <property type="evidence" value="ECO:0007669"/>
    <property type="project" value="UniProtKB-KW"/>
</dbReference>
<dbReference type="GO" id="GO:0007165">
    <property type="term" value="P:signal transduction"/>
    <property type="evidence" value="ECO:0007669"/>
    <property type="project" value="InterPro"/>
</dbReference>
<dbReference type="CDD" id="cd16135">
    <property type="entry name" value="RA_RASSF7"/>
    <property type="match status" value="1"/>
</dbReference>
<dbReference type="FunFam" id="3.10.20.90:FF:000132">
    <property type="entry name" value="Ras association domain-containing protein 7"/>
    <property type="match status" value="1"/>
</dbReference>
<dbReference type="Gene3D" id="3.10.20.90">
    <property type="entry name" value="Phosphatidylinositol 3-kinase Catalytic Subunit, Chain A, domain 1"/>
    <property type="match status" value="1"/>
</dbReference>
<dbReference type="InterPro" id="IPR033593">
    <property type="entry name" value="N-RASSF"/>
</dbReference>
<dbReference type="InterPro" id="IPR000159">
    <property type="entry name" value="RA_dom"/>
</dbReference>
<dbReference type="InterPro" id="IPR033631">
    <property type="entry name" value="RASSF7_RA"/>
</dbReference>
<dbReference type="InterPro" id="IPR029071">
    <property type="entry name" value="Ubiquitin-like_domsf"/>
</dbReference>
<dbReference type="PANTHER" id="PTHR15286:SF11">
    <property type="entry name" value="RAS ASSOCIATION DOMAIN-CONTAINING PROTEIN 7"/>
    <property type="match status" value="1"/>
</dbReference>
<dbReference type="PANTHER" id="PTHR15286">
    <property type="entry name" value="RAS-ASSOCIATING DOMAIN CONTAINING PROTEIN"/>
    <property type="match status" value="1"/>
</dbReference>
<dbReference type="Pfam" id="PF00788">
    <property type="entry name" value="RA"/>
    <property type="match status" value="1"/>
</dbReference>
<dbReference type="SMART" id="SM00314">
    <property type="entry name" value="RA"/>
    <property type="match status" value="1"/>
</dbReference>
<dbReference type="SUPFAM" id="SSF54236">
    <property type="entry name" value="Ubiquitin-like"/>
    <property type="match status" value="1"/>
</dbReference>
<dbReference type="PROSITE" id="PS50200">
    <property type="entry name" value="RA"/>
    <property type="match status" value="1"/>
</dbReference>
<evidence type="ECO:0000250" key="1"/>
<evidence type="ECO:0000255" key="2"/>
<evidence type="ECO:0000255" key="3">
    <source>
        <dbReference type="PROSITE-ProRule" id="PRU00166"/>
    </source>
</evidence>
<evidence type="ECO:0000256" key="4">
    <source>
        <dbReference type="SAM" id="MobiDB-lite"/>
    </source>
</evidence>
<evidence type="ECO:0000305" key="5"/>
<keyword id="KW-0053">Apoptosis</keyword>
<keyword id="KW-0175">Coiled coil</keyword>
<keyword id="KW-0963">Cytoplasm</keyword>
<keyword id="KW-0206">Cytoskeleton</keyword>
<keyword id="KW-1185">Reference proteome</keyword>
<keyword id="KW-0832">Ubl conjugation</keyword>
<name>RASF7_MOUSE</name>
<reference key="1">
    <citation type="journal article" date="2005" name="Science">
        <title>The transcriptional landscape of the mammalian genome.</title>
        <authorList>
            <person name="Carninci P."/>
            <person name="Kasukawa T."/>
            <person name="Katayama S."/>
            <person name="Gough J."/>
            <person name="Frith M.C."/>
            <person name="Maeda N."/>
            <person name="Oyama R."/>
            <person name="Ravasi T."/>
            <person name="Lenhard B."/>
            <person name="Wells C."/>
            <person name="Kodzius R."/>
            <person name="Shimokawa K."/>
            <person name="Bajic V.B."/>
            <person name="Brenner S.E."/>
            <person name="Batalov S."/>
            <person name="Forrest A.R."/>
            <person name="Zavolan M."/>
            <person name="Davis M.J."/>
            <person name="Wilming L.G."/>
            <person name="Aidinis V."/>
            <person name="Allen J.E."/>
            <person name="Ambesi-Impiombato A."/>
            <person name="Apweiler R."/>
            <person name="Aturaliya R.N."/>
            <person name="Bailey T.L."/>
            <person name="Bansal M."/>
            <person name="Baxter L."/>
            <person name="Beisel K.W."/>
            <person name="Bersano T."/>
            <person name="Bono H."/>
            <person name="Chalk A.M."/>
            <person name="Chiu K.P."/>
            <person name="Choudhary V."/>
            <person name="Christoffels A."/>
            <person name="Clutterbuck D.R."/>
            <person name="Crowe M.L."/>
            <person name="Dalla E."/>
            <person name="Dalrymple B.P."/>
            <person name="de Bono B."/>
            <person name="Della Gatta G."/>
            <person name="di Bernardo D."/>
            <person name="Down T."/>
            <person name="Engstrom P."/>
            <person name="Fagiolini M."/>
            <person name="Faulkner G."/>
            <person name="Fletcher C.F."/>
            <person name="Fukushima T."/>
            <person name="Furuno M."/>
            <person name="Futaki S."/>
            <person name="Gariboldi M."/>
            <person name="Georgii-Hemming P."/>
            <person name="Gingeras T.R."/>
            <person name="Gojobori T."/>
            <person name="Green R.E."/>
            <person name="Gustincich S."/>
            <person name="Harbers M."/>
            <person name="Hayashi Y."/>
            <person name="Hensch T.K."/>
            <person name="Hirokawa N."/>
            <person name="Hill D."/>
            <person name="Huminiecki L."/>
            <person name="Iacono M."/>
            <person name="Ikeo K."/>
            <person name="Iwama A."/>
            <person name="Ishikawa T."/>
            <person name="Jakt M."/>
            <person name="Kanapin A."/>
            <person name="Katoh M."/>
            <person name="Kawasawa Y."/>
            <person name="Kelso J."/>
            <person name="Kitamura H."/>
            <person name="Kitano H."/>
            <person name="Kollias G."/>
            <person name="Krishnan S.P."/>
            <person name="Kruger A."/>
            <person name="Kummerfeld S.K."/>
            <person name="Kurochkin I.V."/>
            <person name="Lareau L.F."/>
            <person name="Lazarevic D."/>
            <person name="Lipovich L."/>
            <person name="Liu J."/>
            <person name="Liuni S."/>
            <person name="McWilliam S."/>
            <person name="Madan Babu M."/>
            <person name="Madera M."/>
            <person name="Marchionni L."/>
            <person name="Matsuda H."/>
            <person name="Matsuzawa S."/>
            <person name="Miki H."/>
            <person name="Mignone F."/>
            <person name="Miyake S."/>
            <person name="Morris K."/>
            <person name="Mottagui-Tabar S."/>
            <person name="Mulder N."/>
            <person name="Nakano N."/>
            <person name="Nakauchi H."/>
            <person name="Ng P."/>
            <person name="Nilsson R."/>
            <person name="Nishiguchi S."/>
            <person name="Nishikawa S."/>
            <person name="Nori F."/>
            <person name="Ohara O."/>
            <person name="Okazaki Y."/>
            <person name="Orlando V."/>
            <person name="Pang K.C."/>
            <person name="Pavan W.J."/>
            <person name="Pavesi G."/>
            <person name="Pesole G."/>
            <person name="Petrovsky N."/>
            <person name="Piazza S."/>
            <person name="Reed J."/>
            <person name="Reid J.F."/>
            <person name="Ring B.Z."/>
            <person name="Ringwald M."/>
            <person name="Rost B."/>
            <person name="Ruan Y."/>
            <person name="Salzberg S.L."/>
            <person name="Sandelin A."/>
            <person name="Schneider C."/>
            <person name="Schoenbach C."/>
            <person name="Sekiguchi K."/>
            <person name="Semple C.A."/>
            <person name="Seno S."/>
            <person name="Sessa L."/>
            <person name="Sheng Y."/>
            <person name="Shibata Y."/>
            <person name="Shimada H."/>
            <person name="Shimada K."/>
            <person name="Silva D."/>
            <person name="Sinclair B."/>
            <person name="Sperling S."/>
            <person name="Stupka E."/>
            <person name="Sugiura K."/>
            <person name="Sultana R."/>
            <person name="Takenaka Y."/>
            <person name="Taki K."/>
            <person name="Tammoja K."/>
            <person name="Tan S.L."/>
            <person name="Tang S."/>
            <person name="Taylor M.S."/>
            <person name="Tegner J."/>
            <person name="Teichmann S.A."/>
            <person name="Ueda H.R."/>
            <person name="van Nimwegen E."/>
            <person name="Verardo R."/>
            <person name="Wei C.L."/>
            <person name="Yagi K."/>
            <person name="Yamanishi H."/>
            <person name="Zabarovsky E."/>
            <person name="Zhu S."/>
            <person name="Zimmer A."/>
            <person name="Hide W."/>
            <person name="Bult C."/>
            <person name="Grimmond S.M."/>
            <person name="Teasdale R.D."/>
            <person name="Liu E.T."/>
            <person name="Brusic V."/>
            <person name="Quackenbush J."/>
            <person name="Wahlestedt C."/>
            <person name="Mattick J.S."/>
            <person name="Hume D.A."/>
            <person name="Kai C."/>
            <person name="Sasaki D."/>
            <person name="Tomaru Y."/>
            <person name="Fukuda S."/>
            <person name="Kanamori-Katayama M."/>
            <person name="Suzuki M."/>
            <person name="Aoki J."/>
            <person name="Arakawa T."/>
            <person name="Iida J."/>
            <person name="Imamura K."/>
            <person name="Itoh M."/>
            <person name="Kato T."/>
            <person name="Kawaji H."/>
            <person name="Kawagashira N."/>
            <person name="Kawashima T."/>
            <person name="Kojima M."/>
            <person name="Kondo S."/>
            <person name="Konno H."/>
            <person name="Nakano K."/>
            <person name="Ninomiya N."/>
            <person name="Nishio T."/>
            <person name="Okada M."/>
            <person name="Plessy C."/>
            <person name="Shibata K."/>
            <person name="Shiraki T."/>
            <person name="Suzuki S."/>
            <person name="Tagami M."/>
            <person name="Waki K."/>
            <person name="Watahiki A."/>
            <person name="Okamura-Oho Y."/>
            <person name="Suzuki H."/>
            <person name="Kawai J."/>
            <person name="Hayashizaki Y."/>
        </authorList>
    </citation>
    <scope>NUCLEOTIDE SEQUENCE [LARGE SCALE MRNA]</scope>
    <source>
        <strain>C57BL/6J</strain>
        <tissue>Kidney</tissue>
    </source>
</reference>
<reference key="2">
    <citation type="journal article" date="2004" name="Genome Res.">
        <title>The status, quality, and expansion of the NIH full-length cDNA project: the Mammalian Gene Collection (MGC).</title>
        <authorList>
            <consortium name="The MGC Project Team"/>
        </authorList>
    </citation>
    <scope>NUCLEOTIDE SEQUENCE [LARGE SCALE MRNA]</scope>
    <source>
        <tissue>Colon</tissue>
    </source>
</reference>
<sequence>MVLELVAMELKVWVDGIQRVVCGVSEQTTCQEVVIALAQAIGQTGRFVLVQRLREKERQLLPQECPVGAQATCGQFANDVQFVLRRTGPSLSGRPSSDNCPPPERCPVRASLPPKPSAIPGREPRKALTFNLRCPKLVPSPSIPEPAALVGPIPDGFADLQDLELRIQRNTEELGHEAFWEQELQREQAREREGQARLQALSAATAEHAARLEALDAQACALEAELRLAAEAPGPPSATASAAERLRQDLATQERHSLEMQGTLALVSQALEAAEHALQAQAQELEELNRELRQCNLQQFIQQTGAALPPPPPQLDRTIPSTQDLLSPNRGELQGVPQSHILVSSLSPEVPPMRQSSWR</sequence>
<gene>
    <name type="primary">Rassf7</name>
</gene>
<accession>Q9DD19</accession>